<organism>
    <name type="scientific">Clostridium botulinum (strain Alaska E43 / Type E3)</name>
    <dbReference type="NCBI Taxonomy" id="508767"/>
    <lineage>
        <taxon>Bacteria</taxon>
        <taxon>Bacillati</taxon>
        <taxon>Bacillota</taxon>
        <taxon>Clostridia</taxon>
        <taxon>Eubacteriales</taxon>
        <taxon>Clostridiaceae</taxon>
        <taxon>Clostridium</taxon>
    </lineage>
</organism>
<name>RL28_CLOBA</name>
<proteinExistence type="inferred from homology"/>
<sequence>MARRCEICDKGVVAGVQFSHSHRQSKRTWAPNIKKIKALVNGTPKTVRVCTRCLRSGKVQRAI</sequence>
<comment type="similarity">
    <text evidence="1">Belongs to the bacterial ribosomal protein bL28 family.</text>
</comment>
<reference key="1">
    <citation type="submission" date="2008-05" db="EMBL/GenBank/DDBJ databases">
        <title>Complete genome sequence of Clostridium botulinum E3 str. Alaska E43.</title>
        <authorList>
            <person name="Brinkac L.M."/>
            <person name="Brown J.L."/>
            <person name="Bruce D."/>
            <person name="Detter C."/>
            <person name="Munk C."/>
            <person name="Smith L.A."/>
            <person name="Smith T.J."/>
            <person name="Sutton G."/>
            <person name="Brettin T.S."/>
        </authorList>
    </citation>
    <scope>NUCLEOTIDE SEQUENCE [LARGE SCALE GENOMIC DNA]</scope>
    <source>
        <strain>Alaska E43 / Type E3</strain>
    </source>
</reference>
<evidence type="ECO:0000255" key="1">
    <source>
        <dbReference type="HAMAP-Rule" id="MF_00373"/>
    </source>
</evidence>
<evidence type="ECO:0000305" key="2"/>
<keyword id="KW-0687">Ribonucleoprotein</keyword>
<keyword id="KW-0689">Ribosomal protein</keyword>
<dbReference type="EMBL" id="CP001078">
    <property type="protein sequence ID" value="ACD53511.1"/>
    <property type="molecule type" value="Genomic_DNA"/>
</dbReference>
<dbReference type="RefSeq" id="WP_003373388.1">
    <property type="nucleotide sequence ID" value="NC_010723.1"/>
</dbReference>
<dbReference type="SMR" id="B2V4C1"/>
<dbReference type="KEGG" id="cbt:CLH_1176"/>
<dbReference type="HOGENOM" id="CLU_064548_7_0_9"/>
<dbReference type="GO" id="GO:1990904">
    <property type="term" value="C:ribonucleoprotein complex"/>
    <property type="evidence" value="ECO:0007669"/>
    <property type="project" value="UniProtKB-KW"/>
</dbReference>
<dbReference type="GO" id="GO:0005840">
    <property type="term" value="C:ribosome"/>
    <property type="evidence" value="ECO:0007669"/>
    <property type="project" value="UniProtKB-KW"/>
</dbReference>
<dbReference type="GO" id="GO:0003735">
    <property type="term" value="F:structural constituent of ribosome"/>
    <property type="evidence" value="ECO:0007669"/>
    <property type="project" value="InterPro"/>
</dbReference>
<dbReference type="GO" id="GO:0006412">
    <property type="term" value="P:translation"/>
    <property type="evidence" value="ECO:0007669"/>
    <property type="project" value="UniProtKB-UniRule"/>
</dbReference>
<dbReference type="Gene3D" id="2.30.170.40">
    <property type="entry name" value="Ribosomal protein L28/L24"/>
    <property type="match status" value="1"/>
</dbReference>
<dbReference type="HAMAP" id="MF_00373">
    <property type="entry name" value="Ribosomal_bL28"/>
    <property type="match status" value="1"/>
</dbReference>
<dbReference type="InterPro" id="IPR050096">
    <property type="entry name" value="Bacterial_rp_bL28"/>
</dbReference>
<dbReference type="InterPro" id="IPR026569">
    <property type="entry name" value="Ribosomal_bL28"/>
</dbReference>
<dbReference type="InterPro" id="IPR034704">
    <property type="entry name" value="Ribosomal_bL28/bL31-like_sf"/>
</dbReference>
<dbReference type="InterPro" id="IPR001383">
    <property type="entry name" value="Ribosomal_bL28_bact-type"/>
</dbReference>
<dbReference type="InterPro" id="IPR037147">
    <property type="entry name" value="Ribosomal_bL28_sf"/>
</dbReference>
<dbReference type="NCBIfam" id="TIGR00009">
    <property type="entry name" value="L28"/>
    <property type="match status" value="1"/>
</dbReference>
<dbReference type="PANTHER" id="PTHR39080">
    <property type="entry name" value="50S RIBOSOMAL PROTEIN L28"/>
    <property type="match status" value="1"/>
</dbReference>
<dbReference type="PANTHER" id="PTHR39080:SF1">
    <property type="entry name" value="LARGE RIBOSOMAL SUBUNIT PROTEIN BL28A"/>
    <property type="match status" value="1"/>
</dbReference>
<dbReference type="Pfam" id="PF00830">
    <property type="entry name" value="Ribosomal_L28"/>
    <property type="match status" value="1"/>
</dbReference>
<dbReference type="SUPFAM" id="SSF143800">
    <property type="entry name" value="L28p-like"/>
    <property type="match status" value="1"/>
</dbReference>
<accession>B2V4C1</accession>
<protein>
    <recommendedName>
        <fullName evidence="1">Large ribosomal subunit protein bL28</fullName>
    </recommendedName>
    <alternativeName>
        <fullName evidence="2">50S ribosomal protein L28</fullName>
    </alternativeName>
</protein>
<gene>
    <name evidence="1" type="primary">rpmB</name>
    <name type="ordered locus">CLH_1176</name>
</gene>
<feature type="chain" id="PRO_1000121607" description="Large ribosomal subunit protein bL28">
    <location>
        <begin position="1"/>
        <end position="63"/>
    </location>
</feature>